<comment type="function">
    <text evidence="1">GTPase activator for the Rho-type GTPases by converting them to an inactive GDP-bound state.</text>
</comment>
<proteinExistence type="evidence at transcript level"/>
<evidence type="ECO:0000250" key="1"/>
<evidence type="ECO:0000255" key="2">
    <source>
        <dbReference type="PROSITE-ProRule" id="PRU00172"/>
    </source>
</evidence>
<evidence type="ECO:0000256" key="3">
    <source>
        <dbReference type="SAM" id="MobiDB-lite"/>
    </source>
</evidence>
<organism>
    <name type="scientific">Xenopus laevis</name>
    <name type="common">African clawed frog</name>
    <dbReference type="NCBI Taxonomy" id="8355"/>
    <lineage>
        <taxon>Eukaryota</taxon>
        <taxon>Metazoa</taxon>
        <taxon>Chordata</taxon>
        <taxon>Craniata</taxon>
        <taxon>Vertebrata</taxon>
        <taxon>Euteleostomi</taxon>
        <taxon>Amphibia</taxon>
        <taxon>Batrachia</taxon>
        <taxon>Anura</taxon>
        <taxon>Pipoidea</taxon>
        <taxon>Pipidae</taxon>
        <taxon>Xenopodinae</taxon>
        <taxon>Xenopus</taxon>
        <taxon>Xenopus</taxon>
    </lineage>
</organism>
<feature type="chain" id="PRO_0000280468" description="Rho GTPase-activating protein 19">
    <location>
        <begin position="1"/>
        <end position="507"/>
    </location>
</feature>
<feature type="domain" description="Rho-GAP" evidence="2">
    <location>
        <begin position="112"/>
        <end position="305"/>
    </location>
</feature>
<feature type="region of interest" description="Disordered" evidence="3">
    <location>
        <begin position="344"/>
        <end position="371"/>
    </location>
</feature>
<feature type="region of interest" description="Disordered" evidence="3">
    <location>
        <begin position="400"/>
        <end position="419"/>
    </location>
</feature>
<feature type="region of interest" description="Disordered" evidence="3">
    <location>
        <begin position="483"/>
        <end position="507"/>
    </location>
</feature>
<feature type="compositionally biased region" description="Low complexity" evidence="3">
    <location>
        <begin position="355"/>
        <end position="369"/>
    </location>
</feature>
<feature type="compositionally biased region" description="Polar residues" evidence="3">
    <location>
        <begin position="400"/>
        <end position="413"/>
    </location>
</feature>
<feature type="compositionally biased region" description="Basic and acidic residues" evidence="3">
    <location>
        <begin position="483"/>
        <end position="492"/>
    </location>
</feature>
<feature type="site" description="Arginine finger; crucial for GTP hydrolysis by stabilizing the transition state" evidence="2">
    <location>
        <position position="140"/>
    </location>
</feature>
<protein>
    <recommendedName>
        <fullName>Rho GTPase-activating protein 19</fullName>
    </recommendedName>
    <alternativeName>
        <fullName>Rho-type GTPase-activating protein 19</fullName>
    </alternativeName>
</protein>
<dbReference type="EMBL" id="BC072338">
    <property type="protein sequence ID" value="AAH72338.1"/>
    <property type="molecule type" value="mRNA"/>
</dbReference>
<dbReference type="RefSeq" id="NP_001085418.1">
    <property type="nucleotide sequence ID" value="NM_001091949.1"/>
</dbReference>
<dbReference type="SMR" id="Q6INE5"/>
<dbReference type="DNASU" id="443844"/>
<dbReference type="GeneID" id="443844"/>
<dbReference type="KEGG" id="xla:443844"/>
<dbReference type="AGR" id="Xenbase:XB-GENE-6251735"/>
<dbReference type="CTD" id="443844"/>
<dbReference type="Xenbase" id="XB-GENE-6251735">
    <property type="gene designation" value="arhgap19.L"/>
</dbReference>
<dbReference type="OrthoDB" id="10061772at2759"/>
<dbReference type="Proteomes" id="UP000186698">
    <property type="component" value="Chromosome 7L"/>
</dbReference>
<dbReference type="Bgee" id="443844">
    <property type="expression patterns" value="Expressed in blastula and 12 other cell types or tissues"/>
</dbReference>
<dbReference type="GO" id="GO:0005737">
    <property type="term" value="C:cytoplasm"/>
    <property type="evidence" value="ECO:0000318"/>
    <property type="project" value="GO_Central"/>
</dbReference>
<dbReference type="GO" id="GO:0005096">
    <property type="term" value="F:GTPase activator activity"/>
    <property type="evidence" value="ECO:0000318"/>
    <property type="project" value="GO_Central"/>
</dbReference>
<dbReference type="GO" id="GO:0051056">
    <property type="term" value="P:regulation of small GTPase mediated signal transduction"/>
    <property type="evidence" value="ECO:0000318"/>
    <property type="project" value="GO_Central"/>
</dbReference>
<dbReference type="GO" id="GO:0007165">
    <property type="term" value="P:signal transduction"/>
    <property type="evidence" value="ECO:0007669"/>
    <property type="project" value="InterPro"/>
</dbReference>
<dbReference type="CDD" id="cd04392">
    <property type="entry name" value="RhoGAP_ARHGAP19"/>
    <property type="match status" value="1"/>
</dbReference>
<dbReference type="FunFam" id="1.10.555.10:FF:000022">
    <property type="entry name" value="rho GTPase-activating protein 19"/>
    <property type="match status" value="1"/>
</dbReference>
<dbReference type="Gene3D" id="1.10.555.10">
    <property type="entry name" value="Rho GTPase activation protein"/>
    <property type="match status" value="1"/>
</dbReference>
<dbReference type="InterPro" id="IPR047941">
    <property type="entry name" value="ARHGAP19_RhoGAP"/>
</dbReference>
<dbReference type="InterPro" id="IPR008936">
    <property type="entry name" value="Rho_GTPase_activation_prot"/>
</dbReference>
<dbReference type="InterPro" id="IPR000198">
    <property type="entry name" value="RhoGAP_dom"/>
</dbReference>
<dbReference type="PANTHER" id="PTHR14963">
    <property type="entry name" value="RHO GTPASE ACTIVATING PROTEIN 18,19-RELATED"/>
    <property type="match status" value="1"/>
</dbReference>
<dbReference type="PANTHER" id="PTHR14963:SF7">
    <property type="entry name" value="RHO GTPASE-ACTIVATING PROTEIN 19"/>
    <property type="match status" value="1"/>
</dbReference>
<dbReference type="Pfam" id="PF00620">
    <property type="entry name" value="RhoGAP"/>
    <property type="match status" value="1"/>
</dbReference>
<dbReference type="SMART" id="SM00324">
    <property type="entry name" value="RhoGAP"/>
    <property type="match status" value="1"/>
</dbReference>
<dbReference type="SUPFAM" id="SSF48350">
    <property type="entry name" value="GTPase activation domain, GAP"/>
    <property type="match status" value="1"/>
</dbReference>
<dbReference type="PROSITE" id="PS50238">
    <property type="entry name" value="RHOGAP"/>
    <property type="match status" value="1"/>
</dbReference>
<sequence>MAATEDGGEVDRGISGDALCRIVICNDASLRSQPVIYNPDFFVEKLRHENPEVFTELVVSNLTRLIDLPGTELAQLMGEVDPKLPGHNGAASSFFRSLNFLKRKEKGIVFGAPLTEEGIAQIYQLIDYLHKNLRTEGLFRIPGNSIRQQNLKDLLNSGMDIDVESGEFHPNDVATLLKMFLGELPEPLLTHRHYIAHLKIANLMLFDAKGNRTGVPDKERQIEALQLLFLLLPSPNRNLLKLLLDLLYQTARKQDRNKMSAHNLALMFAPHIIWPKNLTANDLQEHLIKLNNGVTFMIKHSQKLFKAPPYIREYARLHFSGSRTPASKDDLDLLPTRSPSEFHFLKHSKRSRLGSSPSSSTSLQEQTQQHTEEALKELFRHVHNMPDSAKKKRLIRQFNKNTPRTPVSDTQVPNGKKHVRSRTFSGMIKRKVLGSQMASEKKSRTITPQSADGSEYAKENLKYVSVDSPAVYFTRAKLKLSEDLQIRKEASSKSKKSHHKSTQETSI</sequence>
<keyword id="KW-0343">GTPase activation</keyword>
<keyword id="KW-1185">Reference proteome</keyword>
<name>RHG19_XENLA</name>
<gene>
    <name type="primary">arhgap19</name>
</gene>
<reference key="1">
    <citation type="submission" date="2004-06" db="EMBL/GenBank/DDBJ databases">
        <authorList>
            <consortium name="NIH - Xenopus Gene Collection (XGC) project"/>
        </authorList>
    </citation>
    <scope>NUCLEOTIDE SEQUENCE [LARGE SCALE MRNA]</scope>
    <source>
        <tissue>Embryo</tissue>
    </source>
</reference>
<accession>Q6INE5</accession>